<sequence>MTRVALTSAVNLAKKLQDAGIRNPAVLKAISQTPRELFLDNALAHKAYENTALPIGQGQTISQPYIVARMTELLLQHQPQKVLEVGTGSGYQAAILAQLVPELCTVERIKALQIQARQRLKRLDLHNVSFKYGDGWQGWLNRSPYNGIMVTAAAAKIPEALLSQLAEGGVLIIPVGEETQQLMRITRHSDRFSSEVIETVKFVPLVNGELA</sequence>
<dbReference type="EC" id="2.1.1.77" evidence="1"/>
<dbReference type="EMBL" id="AE014299">
    <property type="protein sequence ID" value="AAN56431.1"/>
    <property type="molecule type" value="Genomic_DNA"/>
</dbReference>
<dbReference type="RefSeq" id="NP_718987.1">
    <property type="nucleotide sequence ID" value="NC_004347.2"/>
</dbReference>
<dbReference type="RefSeq" id="WP_011073290.1">
    <property type="nucleotide sequence ID" value="NC_004347.2"/>
</dbReference>
<dbReference type="SMR" id="Q8EBR6"/>
<dbReference type="STRING" id="211586.SO_3434"/>
<dbReference type="PaxDb" id="211586-SO_3434"/>
<dbReference type="KEGG" id="son:SO_3434"/>
<dbReference type="PATRIC" id="fig|211586.12.peg.3329"/>
<dbReference type="eggNOG" id="COG2518">
    <property type="taxonomic scope" value="Bacteria"/>
</dbReference>
<dbReference type="HOGENOM" id="CLU_055432_2_0_6"/>
<dbReference type="OrthoDB" id="9810066at2"/>
<dbReference type="PhylomeDB" id="Q8EBR6"/>
<dbReference type="BioCyc" id="SONE211586:G1GMP-3205-MONOMER"/>
<dbReference type="Proteomes" id="UP000008186">
    <property type="component" value="Chromosome"/>
</dbReference>
<dbReference type="GO" id="GO:0005737">
    <property type="term" value="C:cytoplasm"/>
    <property type="evidence" value="ECO:0000318"/>
    <property type="project" value="GO_Central"/>
</dbReference>
<dbReference type="GO" id="GO:0004719">
    <property type="term" value="F:protein-L-isoaspartate (D-aspartate) O-methyltransferase activity"/>
    <property type="evidence" value="ECO:0000318"/>
    <property type="project" value="GO_Central"/>
</dbReference>
<dbReference type="GO" id="GO:0032259">
    <property type="term" value="P:methylation"/>
    <property type="evidence" value="ECO:0007669"/>
    <property type="project" value="UniProtKB-KW"/>
</dbReference>
<dbReference type="GO" id="GO:0036211">
    <property type="term" value="P:protein modification process"/>
    <property type="evidence" value="ECO:0007669"/>
    <property type="project" value="UniProtKB-UniRule"/>
</dbReference>
<dbReference type="GO" id="GO:0030091">
    <property type="term" value="P:protein repair"/>
    <property type="evidence" value="ECO:0007669"/>
    <property type="project" value="UniProtKB-UniRule"/>
</dbReference>
<dbReference type="CDD" id="cd02440">
    <property type="entry name" value="AdoMet_MTases"/>
    <property type="match status" value="1"/>
</dbReference>
<dbReference type="FunFam" id="3.40.50.150:FF:000010">
    <property type="entry name" value="Protein-L-isoaspartate O-methyltransferase"/>
    <property type="match status" value="1"/>
</dbReference>
<dbReference type="Gene3D" id="3.40.50.150">
    <property type="entry name" value="Vaccinia Virus protein VP39"/>
    <property type="match status" value="1"/>
</dbReference>
<dbReference type="HAMAP" id="MF_00090">
    <property type="entry name" value="PIMT"/>
    <property type="match status" value="1"/>
</dbReference>
<dbReference type="InterPro" id="IPR000682">
    <property type="entry name" value="PCMT"/>
</dbReference>
<dbReference type="InterPro" id="IPR029063">
    <property type="entry name" value="SAM-dependent_MTases_sf"/>
</dbReference>
<dbReference type="NCBIfam" id="TIGR00080">
    <property type="entry name" value="pimt"/>
    <property type="match status" value="1"/>
</dbReference>
<dbReference type="NCBIfam" id="NF001453">
    <property type="entry name" value="PRK00312.1"/>
    <property type="match status" value="1"/>
</dbReference>
<dbReference type="PANTHER" id="PTHR11579">
    <property type="entry name" value="PROTEIN-L-ISOASPARTATE O-METHYLTRANSFERASE"/>
    <property type="match status" value="1"/>
</dbReference>
<dbReference type="PANTHER" id="PTHR11579:SF0">
    <property type="entry name" value="PROTEIN-L-ISOASPARTATE(D-ASPARTATE) O-METHYLTRANSFERASE"/>
    <property type="match status" value="1"/>
</dbReference>
<dbReference type="Pfam" id="PF01135">
    <property type="entry name" value="PCMT"/>
    <property type="match status" value="1"/>
</dbReference>
<dbReference type="SUPFAM" id="SSF53335">
    <property type="entry name" value="S-adenosyl-L-methionine-dependent methyltransferases"/>
    <property type="match status" value="1"/>
</dbReference>
<dbReference type="PROSITE" id="PS01279">
    <property type="entry name" value="PCMT"/>
    <property type="match status" value="1"/>
</dbReference>
<protein>
    <recommendedName>
        <fullName evidence="1">Protein-L-isoaspartate O-methyltransferase</fullName>
        <ecNumber evidence="1">2.1.1.77</ecNumber>
    </recommendedName>
    <alternativeName>
        <fullName evidence="1">L-isoaspartyl protein carboxyl methyltransferase</fullName>
    </alternativeName>
    <alternativeName>
        <fullName evidence="1">Protein L-isoaspartyl methyltransferase</fullName>
    </alternativeName>
    <alternativeName>
        <fullName evidence="1">Protein-beta-aspartate methyltransferase</fullName>
        <shortName evidence="1">PIMT</shortName>
    </alternativeName>
</protein>
<keyword id="KW-0963">Cytoplasm</keyword>
<keyword id="KW-0489">Methyltransferase</keyword>
<keyword id="KW-1185">Reference proteome</keyword>
<keyword id="KW-0949">S-adenosyl-L-methionine</keyword>
<keyword id="KW-0808">Transferase</keyword>
<feature type="chain" id="PRO_1000093286" description="Protein-L-isoaspartate O-methyltransferase">
    <location>
        <begin position="1"/>
        <end position="211"/>
    </location>
</feature>
<feature type="active site" evidence="1">
    <location>
        <position position="62"/>
    </location>
</feature>
<proteinExistence type="inferred from homology"/>
<accession>Q8EBR6</accession>
<reference key="1">
    <citation type="journal article" date="2002" name="Nat. Biotechnol.">
        <title>Genome sequence of the dissimilatory metal ion-reducing bacterium Shewanella oneidensis.</title>
        <authorList>
            <person name="Heidelberg J.F."/>
            <person name="Paulsen I.T."/>
            <person name="Nelson K.E."/>
            <person name="Gaidos E.J."/>
            <person name="Nelson W.C."/>
            <person name="Read T.D."/>
            <person name="Eisen J.A."/>
            <person name="Seshadri R."/>
            <person name="Ward N.L."/>
            <person name="Methe B.A."/>
            <person name="Clayton R.A."/>
            <person name="Meyer T."/>
            <person name="Tsapin A."/>
            <person name="Scott J."/>
            <person name="Beanan M.J."/>
            <person name="Brinkac L.M."/>
            <person name="Daugherty S.C."/>
            <person name="DeBoy R.T."/>
            <person name="Dodson R.J."/>
            <person name="Durkin A.S."/>
            <person name="Haft D.H."/>
            <person name="Kolonay J.F."/>
            <person name="Madupu R."/>
            <person name="Peterson J.D."/>
            <person name="Umayam L.A."/>
            <person name="White O."/>
            <person name="Wolf A.M."/>
            <person name="Vamathevan J.J."/>
            <person name="Weidman J.F."/>
            <person name="Impraim M."/>
            <person name="Lee K."/>
            <person name="Berry K.J."/>
            <person name="Lee C."/>
            <person name="Mueller J."/>
            <person name="Khouri H.M."/>
            <person name="Gill J."/>
            <person name="Utterback T.R."/>
            <person name="McDonald L.A."/>
            <person name="Feldblyum T.V."/>
            <person name="Smith H.O."/>
            <person name="Venter J.C."/>
            <person name="Nealson K.H."/>
            <person name="Fraser C.M."/>
        </authorList>
    </citation>
    <scope>NUCLEOTIDE SEQUENCE [LARGE SCALE GENOMIC DNA]</scope>
    <source>
        <strain>ATCC 700550 / JCM 31522 / CIP 106686 / LMG 19005 / NCIMB 14063 / MR-1</strain>
    </source>
</reference>
<organism>
    <name type="scientific">Shewanella oneidensis (strain ATCC 700550 / JCM 31522 / CIP 106686 / LMG 19005 / NCIMB 14063 / MR-1)</name>
    <dbReference type="NCBI Taxonomy" id="211586"/>
    <lineage>
        <taxon>Bacteria</taxon>
        <taxon>Pseudomonadati</taxon>
        <taxon>Pseudomonadota</taxon>
        <taxon>Gammaproteobacteria</taxon>
        <taxon>Alteromonadales</taxon>
        <taxon>Shewanellaceae</taxon>
        <taxon>Shewanella</taxon>
    </lineage>
</organism>
<name>PIMT_SHEON</name>
<comment type="function">
    <text evidence="1">Catalyzes the methyl esterification of L-isoaspartyl residues in peptides and proteins that result from spontaneous decomposition of normal L-aspartyl and L-asparaginyl residues. It plays a role in the repair and/or degradation of damaged proteins.</text>
</comment>
<comment type="catalytic activity">
    <reaction evidence="1">
        <text>[protein]-L-isoaspartate + S-adenosyl-L-methionine = [protein]-L-isoaspartate alpha-methyl ester + S-adenosyl-L-homocysteine</text>
        <dbReference type="Rhea" id="RHEA:12705"/>
        <dbReference type="Rhea" id="RHEA-COMP:12143"/>
        <dbReference type="Rhea" id="RHEA-COMP:12144"/>
        <dbReference type="ChEBI" id="CHEBI:57856"/>
        <dbReference type="ChEBI" id="CHEBI:59789"/>
        <dbReference type="ChEBI" id="CHEBI:90596"/>
        <dbReference type="ChEBI" id="CHEBI:90598"/>
        <dbReference type="EC" id="2.1.1.77"/>
    </reaction>
</comment>
<comment type="subcellular location">
    <subcellularLocation>
        <location evidence="1">Cytoplasm</location>
    </subcellularLocation>
</comment>
<comment type="similarity">
    <text evidence="1">Belongs to the methyltransferase superfamily. L-isoaspartyl/D-aspartyl protein methyltransferase family.</text>
</comment>
<evidence type="ECO:0000255" key="1">
    <source>
        <dbReference type="HAMAP-Rule" id="MF_00090"/>
    </source>
</evidence>
<gene>
    <name evidence="1" type="primary">pcm</name>
    <name type="ordered locus">SO_3434</name>
</gene>